<dbReference type="EMBL" id="AP011115">
    <property type="protein sequence ID" value="BAH48822.1"/>
    <property type="molecule type" value="Genomic_DNA"/>
</dbReference>
<dbReference type="RefSeq" id="WP_012687829.1">
    <property type="nucleotide sequence ID" value="NC_012522.1"/>
</dbReference>
<dbReference type="SMR" id="C1ARZ5"/>
<dbReference type="STRING" id="632772.ROP_05750"/>
<dbReference type="KEGG" id="rop:ROP_05750"/>
<dbReference type="PATRIC" id="fig|632772.20.peg.633"/>
<dbReference type="HOGENOM" id="CLU_086034_4_0_11"/>
<dbReference type="OrthoDB" id="5245163at2"/>
<dbReference type="Proteomes" id="UP000002212">
    <property type="component" value="Chromosome"/>
</dbReference>
<dbReference type="GO" id="GO:0033281">
    <property type="term" value="C:TAT protein transport complex"/>
    <property type="evidence" value="ECO:0007669"/>
    <property type="project" value="UniProtKB-UniRule"/>
</dbReference>
<dbReference type="GO" id="GO:0008320">
    <property type="term" value="F:protein transmembrane transporter activity"/>
    <property type="evidence" value="ECO:0007669"/>
    <property type="project" value="UniProtKB-UniRule"/>
</dbReference>
<dbReference type="GO" id="GO:0043953">
    <property type="term" value="P:protein transport by the Tat complex"/>
    <property type="evidence" value="ECO:0007669"/>
    <property type="project" value="UniProtKB-UniRule"/>
</dbReference>
<dbReference type="Gene3D" id="1.20.5.3310">
    <property type="match status" value="1"/>
</dbReference>
<dbReference type="HAMAP" id="MF_00236">
    <property type="entry name" value="TatA_E"/>
    <property type="match status" value="1"/>
</dbReference>
<dbReference type="InterPro" id="IPR003369">
    <property type="entry name" value="TatA/B/E"/>
</dbReference>
<dbReference type="InterPro" id="IPR006312">
    <property type="entry name" value="TatA/E"/>
</dbReference>
<dbReference type="NCBIfam" id="NF001854">
    <property type="entry name" value="PRK00575.1"/>
    <property type="match status" value="1"/>
</dbReference>
<dbReference type="NCBIfam" id="TIGR01411">
    <property type="entry name" value="tatAE"/>
    <property type="match status" value="1"/>
</dbReference>
<dbReference type="PANTHER" id="PTHR42982">
    <property type="entry name" value="SEC-INDEPENDENT PROTEIN TRANSLOCASE PROTEIN TATA"/>
    <property type="match status" value="1"/>
</dbReference>
<dbReference type="PANTHER" id="PTHR42982:SF8">
    <property type="entry name" value="SEC-INDEPENDENT PROTEIN TRANSLOCASE PROTEIN TATA"/>
    <property type="match status" value="1"/>
</dbReference>
<dbReference type="Pfam" id="PF02416">
    <property type="entry name" value="TatA_B_E"/>
    <property type="match status" value="1"/>
</dbReference>
<protein>
    <recommendedName>
        <fullName evidence="1">Sec-independent protein translocase protein TatA</fullName>
    </recommendedName>
</protein>
<reference key="1">
    <citation type="submission" date="2009-03" db="EMBL/GenBank/DDBJ databases">
        <title>Comparison of the complete genome sequences of Rhodococcus erythropolis PR4 and Rhodococcus opacus B4.</title>
        <authorList>
            <person name="Takarada H."/>
            <person name="Sekine M."/>
            <person name="Hosoyama A."/>
            <person name="Yamada R."/>
            <person name="Fujisawa T."/>
            <person name="Omata S."/>
            <person name="Shimizu A."/>
            <person name="Tsukatani N."/>
            <person name="Tanikawa S."/>
            <person name="Fujita N."/>
            <person name="Harayama S."/>
        </authorList>
    </citation>
    <scope>NUCLEOTIDE SEQUENCE [LARGE SCALE GENOMIC DNA]</scope>
    <source>
        <strain>B4</strain>
    </source>
</reference>
<evidence type="ECO:0000255" key="1">
    <source>
        <dbReference type="HAMAP-Rule" id="MF_00236"/>
    </source>
</evidence>
<evidence type="ECO:0000256" key="2">
    <source>
        <dbReference type="SAM" id="MobiDB-lite"/>
    </source>
</evidence>
<gene>
    <name evidence="1" type="primary">tatA</name>
    <name type="ordered locus">ROP_05750</name>
</gene>
<proteinExistence type="inferred from homology"/>
<comment type="function">
    <text evidence="1">Part of the twin-arginine translocation (Tat) system that transports large folded proteins containing a characteristic twin-arginine motif in their signal peptide across membranes. TatA could form the protein-conducting channel of the Tat system.</text>
</comment>
<comment type="subunit">
    <text evidence="1">The Tat system comprises two distinct complexes: a TatABC complex, containing multiple copies of TatA, TatB and TatC subunits, and a separate TatA complex, containing only TatA subunits. Substrates initially bind to the TatABC complex, which probably triggers association of the separate TatA complex to form the active translocon.</text>
</comment>
<comment type="subcellular location">
    <subcellularLocation>
        <location evidence="1">Cell membrane</location>
        <topology evidence="1">Single-pass membrane protein</topology>
    </subcellularLocation>
</comment>
<comment type="similarity">
    <text evidence="1">Belongs to the TatA/E family.</text>
</comment>
<accession>C1ARZ5</accession>
<name>TATA_RHOOB</name>
<keyword id="KW-1003">Cell membrane</keyword>
<keyword id="KW-0472">Membrane</keyword>
<keyword id="KW-0653">Protein transport</keyword>
<keyword id="KW-0811">Translocation</keyword>
<keyword id="KW-0812">Transmembrane</keyword>
<keyword id="KW-1133">Transmembrane helix</keyword>
<keyword id="KW-0813">Transport</keyword>
<sequence>MGAMSPWHWAIVALVVVILFGSKKLPDAARGLGRSLRIFKSEVKEMQNDNSTPAPTAQQSAPAELPVADTTTAPVTPPAPVQPQPQHTEPKSA</sequence>
<organism>
    <name type="scientific">Rhodococcus opacus (strain B4)</name>
    <dbReference type="NCBI Taxonomy" id="632772"/>
    <lineage>
        <taxon>Bacteria</taxon>
        <taxon>Bacillati</taxon>
        <taxon>Actinomycetota</taxon>
        <taxon>Actinomycetes</taxon>
        <taxon>Mycobacteriales</taxon>
        <taxon>Nocardiaceae</taxon>
        <taxon>Rhodococcus</taxon>
    </lineage>
</organism>
<feature type="chain" id="PRO_1000197902" description="Sec-independent protein translocase protein TatA">
    <location>
        <begin position="1"/>
        <end position="93"/>
    </location>
</feature>
<feature type="transmembrane region" description="Helical" evidence="1">
    <location>
        <begin position="1"/>
        <end position="21"/>
    </location>
</feature>
<feature type="region of interest" description="Disordered" evidence="2">
    <location>
        <begin position="44"/>
        <end position="93"/>
    </location>
</feature>
<feature type="compositionally biased region" description="Low complexity" evidence="2">
    <location>
        <begin position="51"/>
        <end position="74"/>
    </location>
</feature>